<keyword id="KW-0963">Cytoplasm</keyword>
<keyword id="KW-0238">DNA-binding</keyword>
<reference key="1">
    <citation type="journal article" date="2008" name="J. Bacteriol.">
        <title>Comparative genome sequence analysis of multidrug-resistant Acinetobacter baumannii.</title>
        <authorList>
            <person name="Adams M.D."/>
            <person name="Goglin K."/>
            <person name="Molyneaux N."/>
            <person name="Hujer K.M."/>
            <person name="Lavender H."/>
            <person name="Jamison J.J."/>
            <person name="MacDonald I.J."/>
            <person name="Martin K.M."/>
            <person name="Russo T."/>
            <person name="Campagnari A.A."/>
            <person name="Hujer A.M."/>
            <person name="Bonomo R.A."/>
            <person name="Gill S.R."/>
        </authorList>
    </citation>
    <scope>NUCLEOTIDE SEQUENCE [LARGE SCALE GENOMIC DNA]</scope>
    <source>
        <strain>AB0057</strain>
    </source>
</reference>
<organism>
    <name type="scientific">Acinetobacter baumannii (strain AB0057)</name>
    <dbReference type="NCBI Taxonomy" id="480119"/>
    <lineage>
        <taxon>Bacteria</taxon>
        <taxon>Pseudomonadati</taxon>
        <taxon>Pseudomonadota</taxon>
        <taxon>Gammaproteobacteria</taxon>
        <taxon>Moraxellales</taxon>
        <taxon>Moraxellaceae</taxon>
        <taxon>Acinetobacter</taxon>
        <taxon>Acinetobacter calcoaceticus/baumannii complex</taxon>
    </lineage>
</organism>
<comment type="function">
    <text evidence="1">Binds to DNA and alters its conformation. May be involved in regulation of gene expression, nucleoid organization and DNA protection.</text>
</comment>
<comment type="subunit">
    <text evidence="1">Homodimer.</text>
</comment>
<comment type="subcellular location">
    <subcellularLocation>
        <location evidence="1">Cytoplasm</location>
        <location evidence="1">Nucleoid</location>
    </subcellularLocation>
</comment>
<comment type="similarity">
    <text evidence="1">Belongs to the YbaB/EbfC family.</text>
</comment>
<evidence type="ECO:0000255" key="1">
    <source>
        <dbReference type="HAMAP-Rule" id="MF_00274"/>
    </source>
</evidence>
<protein>
    <recommendedName>
        <fullName evidence="1">Nucleoid-associated protein AB57_1909</fullName>
    </recommendedName>
</protein>
<name>Y1909_ACIB5</name>
<gene>
    <name type="ordered locus">AB57_1909</name>
</gene>
<sequence length="109" mass="12015">MNINMLMQQAQRMQKDMESNIKKAKEELAQTEVHAEAGGGLVKVTMTGRYIVKRIEINPELLQDEPDMIEDLIAAAVNDAVRQAEVVSEEKMQKANSGMGLPPGLAGMF</sequence>
<feature type="chain" id="PRO_1000119307" description="Nucleoid-associated protein AB57_1909">
    <location>
        <begin position="1"/>
        <end position="109"/>
    </location>
</feature>
<dbReference type="EMBL" id="CP001182">
    <property type="protein sequence ID" value="ACJ41287.1"/>
    <property type="molecule type" value="Genomic_DNA"/>
</dbReference>
<dbReference type="RefSeq" id="WP_001024697.1">
    <property type="nucleotide sequence ID" value="NC_011586.2"/>
</dbReference>
<dbReference type="SMR" id="B7I5V5"/>
<dbReference type="KEGG" id="abn:AB57_1909"/>
<dbReference type="HOGENOM" id="CLU_140930_0_0_6"/>
<dbReference type="Proteomes" id="UP000007094">
    <property type="component" value="Chromosome"/>
</dbReference>
<dbReference type="GO" id="GO:0043590">
    <property type="term" value="C:bacterial nucleoid"/>
    <property type="evidence" value="ECO:0007669"/>
    <property type="project" value="UniProtKB-UniRule"/>
</dbReference>
<dbReference type="GO" id="GO:0005829">
    <property type="term" value="C:cytosol"/>
    <property type="evidence" value="ECO:0007669"/>
    <property type="project" value="TreeGrafter"/>
</dbReference>
<dbReference type="GO" id="GO:0003677">
    <property type="term" value="F:DNA binding"/>
    <property type="evidence" value="ECO:0007669"/>
    <property type="project" value="UniProtKB-UniRule"/>
</dbReference>
<dbReference type="Gene3D" id="3.30.1310.10">
    <property type="entry name" value="Nucleoid-associated protein YbaB-like domain"/>
    <property type="match status" value="1"/>
</dbReference>
<dbReference type="HAMAP" id="MF_00274">
    <property type="entry name" value="DNA_YbaB_EbfC"/>
    <property type="match status" value="1"/>
</dbReference>
<dbReference type="InterPro" id="IPR036894">
    <property type="entry name" value="YbaB-like_sf"/>
</dbReference>
<dbReference type="InterPro" id="IPR004401">
    <property type="entry name" value="YbaB/EbfC"/>
</dbReference>
<dbReference type="NCBIfam" id="TIGR00103">
    <property type="entry name" value="DNA_YbaB_EbfC"/>
    <property type="match status" value="1"/>
</dbReference>
<dbReference type="PANTHER" id="PTHR33449">
    <property type="entry name" value="NUCLEOID-ASSOCIATED PROTEIN YBAB"/>
    <property type="match status" value="1"/>
</dbReference>
<dbReference type="PANTHER" id="PTHR33449:SF1">
    <property type="entry name" value="NUCLEOID-ASSOCIATED PROTEIN YBAB"/>
    <property type="match status" value="1"/>
</dbReference>
<dbReference type="Pfam" id="PF02575">
    <property type="entry name" value="YbaB_DNA_bd"/>
    <property type="match status" value="1"/>
</dbReference>
<dbReference type="PIRSF" id="PIRSF004555">
    <property type="entry name" value="UCP004555"/>
    <property type="match status" value="1"/>
</dbReference>
<dbReference type="SUPFAM" id="SSF82607">
    <property type="entry name" value="YbaB-like"/>
    <property type="match status" value="1"/>
</dbReference>
<accession>B7I5V5</accession>
<proteinExistence type="inferred from homology"/>